<accession>A8FHC4</accession>
<reference key="1">
    <citation type="journal article" date="2007" name="PLoS ONE">
        <title>Paradoxical DNA repair and peroxide resistance gene conservation in Bacillus pumilus SAFR-032.</title>
        <authorList>
            <person name="Gioia J."/>
            <person name="Yerrapragada S."/>
            <person name="Qin X."/>
            <person name="Jiang H."/>
            <person name="Igboeli O.C."/>
            <person name="Muzny D."/>
            <person name="Dugan-Rocha S."/>
            <person name="Ding Y."/>
            <person name="Hawes A."/>
            <person name="Liu W."/>
            <person name="Perez L."/>
            <person name="Kovar C."/>
            <person name="Dinh H."/>
            <person name="Lee S."/>
            <person name="Nazareth L."/>
            <person name="Blyth P."/>
            <person name="Holder M."/>
            <person name="Buhay C."/>
            <person name="Tirumalai M.R."/>
            <person name="Liu Y."/>
            <person name="Dasgupta I."/>
            <person name="Bokhetache L."/>
            <person name="Fujita M."/>
            <person name="Karouia F."/>
            <person name="Eswara Moorthy P."/>
            <person name="Siefert J."/>
            <person name="Uzman A."/>
            <person name="Buzumbo P."/>
            <person name="Verma A."/>
            <person name="Zwiya H."/>
            <person name="McWilliams B.D."/>
            <person name="Olowu A."/>
            <person name="Clinkenbeard K.D."/>
            <person name="Newcombe D."/>
            <person name="Golebiewski L."/>
            <person name="Petrosino J.F."/>
            <person name="Nicholson W.L."/>
            <person name="Fox G.E."/>
            <person name="Venkateswaran K."/>
            <person name="Highlander S.K."/>
            <person name="Weinstock G.M."/>
        </authorList>
    </citation>
    <scope>NUCLEOTIDE SEQUENCE [LARGE SCALE GENOMIC DNA]</scope>
    <source>
        <strain>SAFR-032</strain>
    </source>
</reference>
<gene>
    <name evidence="1" type="primary">uxaC</name>
    <name type="ordered locus">BPUM_2987</name>
</gene>
<name>UXAC_BACP2</name>
<protein>
    <recommendedName>
        <fullName evidence="1">Uronate isomerase</fullName>
        <ecNumber evidence="1">5.3.1.12</ecNumber>
    </recommendedName>
    <alternativeName>
        <fullName evidence="1">Glucuronate isomerase</fullName>
    </alternativeName>
    <alternativeName>
        <fullName evidence="1">Uronic isomerase</fullName>
    </alternativeName>
</protein>
<feature type="chain" id="PRO_1000061949" description="Uronate isomerase">
    <location>
        <begin position="1"/>
        <end position="478"/>
    </location>
</feature>
<dbReference type="EC" id="5.3.1.12" evidence="1"/>
<dbReference type="EMBL" id="CP000813">
    <property type="protein sequence ID" value="ABV63641.1"/>
    <property type="molecule type" value="Genomic_DNA"/>
</dbReference>
<dbReference type="RefSeq" id="WP_012011237.1">
    <property type="nucleotide sequence ID" value="NZ_VEIS01000008.1"/>
</dbReference>
<dbReference type="SMR" id="A8FHC4"/>
<dbReference type="STRING" id="315750.BPUM_2987"/>
<dbReference type="GeneID" id="5622275"/>
<dbReference type="KEGG" id="bpu:BPUM_2987"/>
<dbReference type="eggNOG" id="COG1904">
    <property type="taxonomic scope" value="Bacteria"/>
</dbReference>
<dbReference type="HOGENOM" id="CLU_044465_1_0_9"/>
<dbReference type="OrthoDB" id="9766564at2"/>
<dbReference type="UniPathway" id="UPA00246"/>
<dbReference type="Proteomes" id="UP000001355">
    <property type="component" value="Chromosome"/>
</dbReference>
<dbReference type="GO" id="GO:0008880">
    <property type="term" value="F:glucuronate isomerase activity"/>
    <property type="evidence" value="ECO:0007669"/>
    <property type="project" value="UniProtKB-UniRule"/>
</dbReference>
<dbReference type="GO" id="GO:0019698">
    <property type="term" value="P:D-galacturonate catabolic process"/>
    <property type="evidence" value="ECO:0007669"/>
    <property type="project" value="TreeGrafter"/>
</dbReference>
<dbReference type="GO" id="GO:0042840">
    <property type="term" value="P:D-glucuronate catabolic process"/>
    <property type="evidence" value="ECO:0007669"/>
    <property type="project" value="TreeGrafter"/>
</dbReference>
<dbReference type="Gene3D" id="3.20.20.140">
    <property type="entry name" value="Metal-dependent hydrolases"/>
    <property type="match status" value="1"/>
</dbReference>
<dbReference type="Gene3D" id="1.10.2020.10">
    <property type="entry name" value="uronate isomerase, domain 2, chain A"/>
    <property type="match status" value="1"/>
</dbReference>
<dbReference type="HAMAP" id="MF_00675">
    <property type="entry name" value="UxaC"/>
    <property type="match status" value="1"/>
</dbReference>
<dbReference type="InterPro" id="IPR032466">
    <property type="entry name" value="Metal_Hydrolase"/>
</dbReference>
<dbReference type="InterPro" id="IPR003766">
    <property type="entry name" value="Uronate_isomerase"/>
</dbReference>
<dbReference type="NCBIfam" id="NF002794">
    <property type="entry name" value="PRK02925.1"/>
    <property type="match status" value="1"/>
</dbReference>
<dbReference type="PANTHER" id="PTHR30068">
    <property type="entry name" value="URONATE ISOMERASE"/>
    <property type="match status" value="1"/>
</dbReference>
<dbReference type="PANTHER" id="PTHR30068:SF4">
    <property type="entry name" value="URONATE ISOMERASE"/>
    <property type="match status" value="1"/>
</dbReference>
<dbReference type="Pfam" id="PF02614">
    <property type="entry name" value="UxaC"/>
    <property type="match status" value="1"/>
</dbReference>
<dbReference type="SUPFAM" id="SSF51556">
    <property type="entry name" value="Metallo-dependent hydrolases"/>
    <property type="match status" value="1"/>
</dbReference>
<keyword id="KW-0413">Isomerase</keyword>
<organism>
    <name type="scientific">Bacillus pumilus (strain SAFR-032)</name>
    <dbReference type="NCBI Taxonomy" id="315750"/>
    <lineage>
        <taxon>Bacteria</taxon>
        <taxon>Bacillati</taxon>
        <taxon>Bacillota</taxon>
        <taxon>Bacilli</taxon>
        <taxon>Bacillales</taxon>
        <taxon>Bacillaceae</taxon>
        <taxon>Bacillus</taxon>
    </lineage>
</organism>
<evidence type="ECO:0000255" key="1">
    <source>
        <dbReference type="HAMAP-Rule" id="MF_00675"/>
    </source>
</evidence>
<proteinExistence type="inferred from homology"/>
<sequence>MKAFLNEQFLLNSPTAEKLYHEFAKDLPIIDYHCHLSPKDIYENKTFRNITEAWLYGDHYKWRAMRANGIPETHVTGDASDYDKFLAWAKTVPMTIGNPLYHWTHLELRRYFEVQDLLNEKNADTIWQKVNEKLQEEGFGARDFIMKSNVETVVTTDDPIDSLQYHQKLREEGFSVQVLPGFRPDKALDIANDLFEKYVHELAEASAISIQSYQDFLNALRARIDFFHEHGCLISDHAINEMTYEETTQEEVETIFHKRMSGYPLTEKEKIKFKTETFIMLGQAYCERGWAMQLHINALRNNNTKMFERLGPDTGYDAMNDEDIAKPLCRILDRLEQEDALPNTILYSLNPRDNVVISTLAGSFQDGKTPGKMQHGTAWWFNDTKQGMTEQMMTLSSIGLISRFIGMLTDSRSFLSYTRHEYFRRLLCDIIGDWVEKGEVPYDLELLGEIVKGISYENAKQYFQFDRVKQLHHQSKIT</sequence>
<comment type="catalytic activity">
    <reaction evidence="1">
        <text>D-glucuronate = D-fructuronate</text>
        <dbReference type="Rhea" id="RHEA:13049"/>
        <dbReference type="ChEBI" id="CHEBI:58720"/>
        <dbReference type="ChEBI" id="CHEBI:59863"/>
        <dbReference type="EC" id="5.3.1.12"/>
    </reaction>
</comment>
<comment type="catalytic activity">
    <reaction evidence="1">
        <text>aldehydo-D-galacturonate = keto-D-tagaturonate</text>
        <dbReference type="Rhea" id="RHEA:27702"/>
        <dbReference type="ChEBI" id="CHEBI:12952"/>
        <dbReference type="ChEBI" id="CHEBI:17886"/>
        <dbReference type="EC" id="5.3.1.12"/>
    </reaction>
</comment>
<comment type="pathway">
    <text evidence="1">Carbohydrate metabolism; pentose and glucuronate interconversion.</text>
</comment>
<comment type="similarity">
    <text evidence="1">Belongs to the metallo-dependent hydrolases superfamily. Uronate isomerase family.</text>
</comment>